<keyword id="KW-0165">Cleavage on pair of basic residues</keyword>
<keyword id="KW-1015">Disulfide bond</keyword>
<keyword id="KW-0872">Ion channel impairing toxin</keyword>
<keyword id="KW-0166">Nematocyst</keyword>
<keyword id="KW-0528">Neurotoxin</keyword>
<keyword id="KW-0964">Secreted</keyword>
<keyword id="KW-0732">Signal</keyword>
<keyword id="KW-0800">Toxin</keyword>
<keyword id="KW-0738">Voltage-gated sodium channel impairing toxin</keyword>
<accession>P0DL51</accession>
<accession>B1NWR0</accession>
<sequence>MMNRLLVFLMLGAAFMLVVSAIDQDANEDINKRGVPCLCDSDGPSVRGNTLSGIIWLAGCPSGWHNCKKHGPTIGWCCKQ</sequence>
<protein>
    <recommendedName>
        <fullName evidence="7">Delta-actitoxin-Avd1c 3</fullName>
        <shortName evidence="7">Delta-AITX-Avd1c 3</shortName>
    </recommendedName>
    <alternativeName>
        <fullName>Anemonia viridis toxin 2</fullName>
        <shortName evidence="6">Av2</shortName>
        <shortName evidence="7">Avt 2</shortName>
    </alternativeName>
    <alternativeName>
        <fullName evidence="10">Toxin Av2-3</fullName>
    </alternativeName>
</protein>
<name>NA123_ANEVI</name>
<feature type="signal peptide" evidence="2">
    <location>
        <begin position="1"/>
        <end position="21"/>
    </location>
</feature>
<feature type="propeptide" id="PRO_0000433681" evidence="1">
    <location>
        <begin position="22"/>
        <end position="31"/>
    </location>
</feature>
<feature type="chain" id="PRO_0000433795" description="Delta-actitoxin-Avd1c 3">
    <location>
        <begin position="34"/>
        <end position="80"/>
    </location>
</feature>
<feature type="disulfide bond" evidence="1">
    <location>
        <begin position="37"/>
        <end position="77"/>
    </location>
</feature>
<feature type="disulfide bond" evidence="1">
    <location>
        <begin position="39"/>
        <end position="67"/>
    </location>
</feature>
<feature type="disulfide bond" evidence="1">
    <location>
        <begin position="60"/>
        <end position="78"/>
    </location>
</feature>
<feature type="mutagenesis site" description="9.8-fold decrease in binding affinity to cockroach sodium channels and correlated loss of toxicity to blowfly larvae." evidence="3">
    <original>V</original>
    <variation>A</variation>
    <location>
        <position position="35"/>
    </location>
</feature>
<feature type="mutagenesis site" description="27-fold decrease in binding affinity to cockroach sodium channels and correlated loss of toxicity to blowfly larvae. In vivo, slightly affects fish larvae after several hours." evidence="3 5">
    <original>L</original>
    <variation>A</variation>
    <location>
        <position position="38"/>
    </location>
</feature>
<feature type="mutagenesis site" description="317-fold decrease in binding affinity to cockroach sodium channels and correlated loss of toxicity to blowfly larvae." evidence="3">
    <original>D</original>
    <variation>A</variation>
    <location>
        <position position="42"/>
    </location>
</feature>
<feature type="mutagenesis site" description="11-fold decrease in binding affinity to cockroach sodium channels and correlated loss of toxicity to blowfly larvae." evidence="3">
    <original>N</original>
    <variation>A</variation>
    <location>
        <position position="49"/>
    </location>
</feature>
<feature type="mutagenesis site" description="209-fold decrease in binding affinity to cockroach sodium channels and correlated loss of toxicity to blowfly larvae." evidence="3">
    <original>L</original>
    <variation>A</variation>
    <location>
        <position position="51"/>
    </location>
</feature>
<feature type="mutagenesis site" description="16-fold decrease in binding affinity to cockroach sodium channels and correlated loss of toxicity to blowfly larvae." evidence="3">
    <original>I</original>
    <variation>A</variation>
    <location>
        <position position="74"/>
    </location>
</feature>
<evidence type="ECO:0000250" key="1">
    <source>
        <dbReference type="UniProtKB" id="P01528"/>
    </source>
</evidence>
<evidence type="ECO:0000255" key="2"/>
<evidence type="ECO:0000269" key="3">
    <source>
    </source>
</evidence>
<evidence type="ECO:0000269" key="4">
    <source>
    </source>
</evidence>
<evidence type="ECO:0000269" key="5">
    <source>
    </source>
</evidence>
<evidence type="ECO:0000303" key="6">
    <source>
    </source>
</evidence>
<evidence type="ECO:0000303" key="7">
    <source>
    </source>
</evidence>
<evidence type="ECO:0000305" key="8"/>
<evidence type="ECO:0000305" key="9">
    <source>
    </source>
</evidence>
<evidence type="ECO:0000312" key="10">
    <source>
        <dbReference type="EMBL" id="ABW97328.1"/>
    </source>
</evidence>
<organism>
    <name type="scientific">Anemonia viridis</name>
    <name type="common">Snakelocks anemone</name>
    <dbReference type="NCBI Taxonomy" id="51769"/>
    <lineage>
        <taxon>Eukaryota</taxon>
        <taxon>Metazoa</taxon>
        <taxon>Cnidaria</taxon>
        <taxon>Anthozoa</taxon>
        <taxon>Hexacorallia</taxon>
        <taxon>Actiniaria</taxon>
        <taxon>Actiniidae</taxon>
        <taxon>Anemonia</taxon>
    </lineage>
</organism>
<comment type="function">
    <text evidence="1 5">Binds specifically to voltage-gated sodium channels (Nav) (site 3), thereby delaying their inactivation during signal transduction (By similarity). Has a strong effect on crustaceans and insects and a weaker effect on mammals (By similarity). It strongly inhibits D.melanogaster sodium channel (DmNav1) (By similarity). It strongly affects the heart sodium channels (Nav1.5/SCN5A) and weakly inhibits the brain sodium channel Nav1.2/SCN2A (By similarity). In vivo, when released into the medium, this recombinant toxin induces impaired swimming, paralysis and death of the crustacean A.nauplii within several hours (PubMed:22048953). Its effect on zebrafish (D.rerio) larvae is much faster, since it induces paralysis or strong convulsion and impaired swimming, within 10 minutes (PubMed:22048953).</text>
</comment>
<comment type="subcellular location">
    <subcellularLocation>
        <location evidence="9">Secreted</location>
    </subcellularLocation>
    <subcellularLocation>
        <location evidence="9">Nematocyst</location>
    </subcellularLocation>
    <text evidence="9">In nematocyst, is associated with the tubule prior to discharge.</text>
</comment>
<comment type="tissue specificity">
    <text evidence="9">Expressed in gland cells and nematocytes.</text>
</comment>
<comment type="toxic dose">
    <text evidence="3">Dose that immobilizes and contracts insects (ED(50)) is 3.7 pmol/g body weight when intersegmentally injected into S.falculata.</text>
</comment>
<comment type="miscellaneous">
    <text evidence="4">This protein is encoded by at least 3 different genes. At least 3 other genes code for a similar Av2 with an Ile (instead a Val) at position 35.</text>
</comment>
<comment type="similarity">
    <text evidence="8">Belongs to the sea anemone sodium channel inhibitory toxin family. Type I subfamily.</text>
</comment>
<comment type="caution">
    <text evidence="8">Opinions are divided on whether Anemonia viridis (Forsskal, 1775) and Anemonia sulcata (Pennant, 1777) are separate species.</text>
</comment>
<dbReference type="EMBL" id="EU124449">
    <property type="protein sequence ID" value="ABW97328.1"/>
    <property type="molecule type" value="Genomic_DNA"/>
</dbReference>
<dbReference type="SMR" id="P0DL51"/>
<dbReference type="GO" id="GO:0005576">
    <property type="term" value="C:extracellular region"/>
    <property type="evidence" value="ECO:0007669"/>
    <property type="project" value="UniProtKB-SubCell"/>
</dbReference>
<dbReference type="GO" id="GO:0042151">
    <property type="term" value="C:nematocyst"/>
    <property type="evidence" value="ECO:0007669"/>
    <property type="project" value="UniProtKB-SubCell"/>
</dbReference>
<dbReference type="GO" id="GO:0017080">
    <property type="term" value="F:sodium channel regulator activity"/>
    <property type="evidence" value="ECO:0007669"/>
    <property type="project" value="UniProtKB-KW"/>
</dbReference>
<dbReference type="GO" id="GO:0090729">
    <property type="term" value="F:toxin activity"/>
    <property type="evidence" value="ECO:0007669"/>
    <property type="project" value="UniProtKB-KW"/>
</dbReference>
<dbReference type="Gene3D" id="2.20.20.10">
    <property type="entry name" value="Anthopleurin-A"/>
    <property type="match status" value="1"/>
</dbReference>
<dbReference type="InterPro" id="IPR023355">
    <property type="entry name" value="Myo_ane_neurotoxin_sf"/>
</dbReference>
<dbReference type="Pfam" id="PF00706">
    <property type="entry name" value="Toxin_4"/>
    <property type="match status" value="1"/>
</dbReference>
<dbReference type="SUPFAM" id="SSF57392">
    <property type="entry name" value="Defensin-like"/>
    <property type="match status" value="1"/>
</dbReference>
<proteinExistence type="evidence at protein level"/>
<reference key="1">
    <citation type="journal article" date="2008" name="Mol. Biol. Evol.">
        <title>Concerted evolution of sea anemone neurotoxin genes is revealed through analysis of the Nematostella vectensis genome.</title>
        <authorList>
            <person name="Moran Y."/>
            <person name="Weinberger H."/>
            <person name="Sullivan J.C."/>
            <person name="Reitzel A.M."/>
            <person name="Finnerty J.R."/>
            <person name="Gurevitz M."/>
        </authorList>
    </citation>
    <scope>NUCLEOTIDE SEQUENCE [GENOMIC DNA / MRNA]</scope>
</reference>
<reference key="2">
    <citation type="journal article" date="2006" name="Biochemistry">
        <title>Expression and mutagenesis of the sea anemone toxin Av2 reveals key amino acid residues important for activity on voltage-gated sodium channels.</title>
        <authorList>
            <person name="Moran Y."/>
            <person name="Cohen L."/>
            <person name="Kahn R."/>
            <person name="Karbat I."/>
            <person name="Gordon D."/>
            <person name="Gurevitz M."/>
        </authorList>
    </citation>
    <scope>MUTAGENESIS OF VAL-35; LEU-38; ASP-42; ASN-49; LEU-51 AND ILE-74</scope>
    <scope>TOXIC DOSE</scope>
</reference>
<reference key="3">
    <citation type="journal article" date="2012" name="Proc. R. Soc. B">
        <title>Neurotoxin localization to ectodermal gland cells uncovers an alternative mechanism of venom delivery in sea anemones.</title>
        <authorList>
            <person name="Moran Y."/>
            <person name="Genikhovich G."/>
            <person name="Gordon D."/>
            <person name="Wienkoop S."/>
            <person name="Zenkert C."/>
            <person name="Ozbek S."/>
            <person name="Technau U."/>
            <person name="Gurevitz M."/>
        </authorList>
    </citation>
    <scope>FUNCTION</scope>
    <scope>SUBCELLULAR LOCATION</scope>
    <scope>TISSUE SPECIFICITY</scope>
    <scope>MUTAGENESIS OF LEU-38</scope>
</reference>
<reference key="4">
    <citation type="journal article" date="2012" name="Toxicon">
        <title>Development of a rational nomenclature for naming peptide and protein toxins from sea anemones.</title>
        <authorList>
            <person name="Oliveira J.S."/>
            <person name="Fuentes-Silva D."/>
            <person name="King G.F."/>
        </authorList>
    </citation>
    <scope>NOMENCLATURE</scope>
</reference>